<sequence length="149" mass="16838">MADQLTEEQIAEFKEAFSLFDKDGDGTITTKELGTVMRSLGQNPTEAELQDMINEVDADGNGTIDFPEFLTMMARKMKDTDSEEEIREAFRVFDKDGNGYISAAELRHVMTNLGEKLTDEEVDEMIREADIDGDGQVNYEEFVQMMTAK</sequence>
<keyword id="KW-0002">3D-structure</keyword>
<keyword id="KW-0007">Acetylation</keyword>
<keyword id="KW-0106">Calcium</keyword>
<keyword id="KW-0963">Cytoplasm</keyword>
<keyword id="KW-0206">Cytoskeleton</keyword>
<keyword id="KW-0903">Direct protein sequencing</keyword>
<keyword id="KW-0225">Disease variant</keyword>
<keyword id="KW-1017">Isopeptide bond</keyword>
<keyword id="KW-0454">Long QT syndrome</keyword>
<keyword id="KW-0479">Metal-binding</keyword>
<keyword id="KW-0488">Methylation</keyword>
<keyword id="KW-0597">Phosphoprotein</keyword>
<keyword id="KW-1185">Reference proteome</keyword>
<keyword id="KW-0677">Repeat</keyword>
<keyword id="KW-0832">Ubl conjugation</keyword>
<gene>
    <name evidence="35" type="primary">CALM3</name>
    <name type="synonym">CALML2</name>
    <name type="synonym">CAM3</name>
    <name type="synonym">CAMC</name>
    <name type="synonym">CAMIII</name>
</gene>
<dbReference type="EMBL" id="J04046">
    <property type="protein sequence ID" value="AAA51918.1"/>
    <property type="molecule type" value="mRNA"/>
</dbReference>
<dbReference type="EMBL" id="X52606">
    <property type="protein sequence ID" value="CAA36839.1"/>
    <property type="status" value="ALT_SEQ"/>
    <property type="molecule type" value="Genomic_DNA"/>
</dbReference>
<dbReference type="EMBL" id="X52607">
    <property type="protein sequence ID" value="CAA36839.1"/>
    <property type="status" value="JOINED"/>
    <property type="molecule type" value="Genomic_DNA"/>
</dbReference>
<dbReference type="EMBL" id="X52608">
    <property type="protein sequence ID" value="CAA36839.1"/>
    <property type="status" value="JOINED"/>
    <property type="molecule type" value="Genomic_DNA"/>
</dbReference>
<dbReference type="EMBL" id="BT006855">
    <property type="protein sequence ID" value="AAP35501.1"/>
    <property type="molecule type" value="mRNA"/>
</dbReference>
<dbReference type="EMBL" id="AC093503">
    <property type="status" value="NOT_ANNOTATED_CDS"/>
    <property type="molecule type" value="Genomic_DNA"/>
</dbReference>
<dbReference type="EMBL" id="BC005137">
    <property type="protein sequence ID" value="AAH05137.1"/>
    <property type="molecule type" value="mRNA"/>
</dbReference>
<dbReference type="CCDS" id="CCDS33061.1"/>
<dbReference type="CCDS" id="CCDS86782.1"/>
<dbReference type="RefSeq" id="NP_001316851.1">
    <property type="nucleotide sequence ID" value="NM_001329922.1"/>
</dbReference>
<dbReference type="RefSeq" id="NP_001316852.1">
    <property type="nucleotide sequence ID" value="NM_001329923.1"/>
</dbReference>
<dbReference type="RefSeq" id="NP_001316853.1">
    <property type="nucleotide sequence ID" value="NM_001329924.1"/>
</dbReference>
<dbReference type="RefSeq" id="NP_001316854.1">
    <property type="nucleotide sequence ID" value="NM_001329925.1"/>
</dbReference>
<dbReference type="RefSeq" id="NP_001316855.1">
    <property type="nucleotide sequence ID" value="NM_001329926.1"/>
</dbReference>
<dbReference type="RefSeq" id="NP_001734.1">
    <property type="nucleotide sequence ID" value="NM_001743.5"/>
</dbReference>
<dbReference type="RefSeq" id="NP_005175.2">
    <property type="nucleotide sequence ID" value="NM_005184.4"/>
</dbReference>
<dbReference type="RefSeq" id="NP_008819.1">
    <property type="nucleotide sequence ID" value="NM_006888.4"/>
</dbReference>
<dbReference type="PDB" id="5COC">
    <property type="method" value="X-ray"/>
    <property type="resolution" value="2.67 A"/>
    <property type="chains" value="A=7-78"/>
</dbReference>
<dbReference type="PDB" id="5J03">
    <property type="method" value="X-ray"/>
    <property type="resolution" value="2.00 A"/>
    <property type="chains" value="B=1-149"/>
</dbReference>
<dbReference type="PDB" id="6K67">
    <property type="method" value="X-ray"/>
    <property type="resolution" value="1.95 A"/>
    <property type="chains" value="B/D=9-81"/>
</dbReference>
<dbReference type="PDB" id="7BYL">
    <property type="method" value="EM"/>
    <property type="resolution" value="2.50 A"/>
    <property type="chains" value="B/D/F/H=1-149"/>
</dbReference>
<dbReference type="PDB" id="7BYM">
    <property type="method" value="EM"/>
    <property type="resolution" value="3.10 A"/>
    <property type="chains" value="B/D/F/H=1-149"/>
</dbReference>
<dbReference type="PDB" id="7BYN">
    <property type="method" value="EM"/>
    <property type="resolution" value="3.30 A"/>
    <property type="chains" value="B/D/F/H=1-149"/>
</dbReference>
<dbReference type="PDB" id="7CR3">
    <property type="method" value="EM"/>
    <property type="resolution" value="3.60 A"/>
    <property type="chains" value="C/E/F/H=1-149"/>
</dbReference>
<dbReference type="PDB" id="7CR4">
    <property type="method" value="EM"/>
    <property type="resolution" value="3.90 A"/>
    <property type="chains" value="C/E/G/H=1-149"/>
</dbReference>
<dbReference type="PDB" id="7CR7">
    <property type="method" value="EM"/>
    <property type="resolution" value="3.70 A"/>
    <property type="chains" value="C/E/F/H=1-149"/>
</dbReference>
<dbReference type="PDB" id="7VNP">
    <property type="method" value="EM"/>
    <property type="resolution" value="2.79 A"/>
    <property type="chains" value="B/D/F/H=1-149"/>
</dbReference>
<dbReference type="PDB" id="7VNQ">
    <property type="method" value="EM"/>
    <property type="resolution" value="2.96 A"/>
    <property type="chains" value="B/D/F/H=1-149"/>
</dbReference>
<dbReference type="PDB" id="7VNR">
    <property type="method" value="EM"/>
    <property type="resolution" value="2.80 A"/>
    <property type="chains" value="B/D/F/H=1-149"/>
</dbReference>
<dbReference type="PDB" id="7XNI">
    <property type="method" value="EM"/>
    <property type="resolution" value="3.50 A"/>
    <property type="chains" value="C/E/F/H=1-149"/>
</dbReference>
<dbReference type="PDB" id="7XNK">
    <property type="method" value="EM"/>
    <property type="resolution" value="2.60 A"/>
    <property type="chains" value="B/D/F/H=1-149"/>
</dbReference>
<dbReference type="PDB" id="7XNL">
    <property type="method" value="EM"/>
    <property type="resolution" value="3.10 A"/>
    <property type="chains" value="B/D/F/H=1-149"/>
</dbReference>
<dbReference type="PDB" id="7XNN">
    <property type="method" value="EM"/>
    <property type="resolution" value="2.50 A"/>
    <property type="chains" value="A/D/F/H=1-149"/>
</dbReference>
<dbReference type="PDB" id="8BD2">
    <property type="method" value="NMR"/>
    <property type="chains" value="A=2-149"/>
</dbReference>
<dbReference type="PDBsum" id="5COC"/>
<dbReference type="PDBsum" id="5J03"/>
<dbReference type="PDBsum" id="6K67"/>
<dbReference type="PDBsum" id="7BYL"/>
<dbReference type="PDBsum" id="7BYM"/>
<dbReference type="PDBsum" id="7BYN"/>
<dbReference type="PDBsum" id="7CR3"/>
<dbReference type="PDBsum" id="7CR4"/>
<dbReference type="PDBsum" id="7CR7"/>
<dbReference type="PDBsum" id="7VNP"/>
<dbReference type="PDBsum" id="7VNQ"/>
<dbReference type="PDBsum" id="7VNR"/>
<dbReference type="PDBsum" id="7XNI"/>
<dbReference type="PDBsum" id="7XNK"/>
<dbReference type="PDBsum" id="7XNL"/>
<dbReference type="PDBsum" id="7XNN"/>
<dbReference type="PDBsum" id="8BD2"/>
<dbReference type="EMDB" id="EMD-30244"/>
<dbReference type="EMDB" id="EMD-30245"/>
<dbReference type="EMDB" id="EMD-30246"/>
<dbReference type="EMDB" id="EMD-30446"/>
<dbReference type="EMDB" id="EMD-30447"/>
<dbReference type="EMDB" id="EMD-30448"/>
<dbReference type="EMDB" id="EMD-32044"/>
<dbReference type="EMDB" id="EMD-32045"/>
<dbReference type="EMDB" id="EMD-32046"/>
<dbReference type="EMDB" id="EMD-33316"/>
<dbReference type="EMDB" id="EMD-33317"/>
<dbReference type="EMDB" id="EMD-33318"/>
<dbReference type="EMDB" id="EMD-33319"/>
<dbReference type="SMR" id="P0DP25"/>
<dbReference type="ComplexPortal" id="CPX-1001">
    <property type="entry name" value="Calcineurin-Calmodulin complex, gamma-R1 variant"/>
</dbReference>
<dbReference type="ComplexPortal" id="CPX-1002">
    <property type="entry name" value="Calcineurin-Calmodulin complex, beta-R2 variant"/>
</dbReference>
<dbReference type="ComplexPortal" id="CPX-1003">
    <property type="entry name" value="Calcineurin-Calmodulin complex, alpha-R1 variant"/>
</dbReference>
<dbReference type="ComplexPortal" id="CPX-1009">
    <property type="entry name" value="Calcineurin-Calmodulin complex, beta-R1 variant"/>
</dbReference>
<dbReference type="ComplexPortal" id="CPX-102">
    <property type="entry name" value="DAPK1 - calmodulin complex"/>
</dbReference>
<dbReference type="ComplexPortal" id="CPX-1048">
    <property type="entry name" value="Calcineurin-Calmodulin complex, alpha-R2 variant"/>
</dbReference>
<dbReference type="ComplexPortal" id="CPX-1050">
    <property type="entry name" value="Calcineurin-Calmodulin complex, gamma-R2 variant"/>
</dbReference>
<dbReference type="ComplexPortal" id="CPX-1112">
    <property type="entry name" value="Calcineurin-Calmodulin-AKAP5 complex, gamma-R1 variant"/>
</dbReference>
<dbReference type="ComplexPortal" id="CPX-1114">
    <property type="entry name" value="Calcineurin-Calmodulin-AKAP5 complex, alpha-R2 variant"/>
</dbReference>
<dbReference type="ComplexPortal" id="CPX-1116">
    <property type="entry name" value="Calcineurin-Calmodulin-AKAP5 complex, beta-R2 variant"/>
</dbReference>
<dbReference type="ComplexPortal" id="CPX-1118">
    <property type="entry name" value="Calcineurin-Calmodulin-AKAP5 complex, gamma-R2 variant"/>
</dbReference>
<dbReference type="ComplexPortal" id="CPX-2341">
    <property type="entry name" value="NALCN channelosome complex"/>
</dbReference>
<dbReference type="ComplexPortal" id="CPX-2640">
    <property type="entry name" value="Phosphorylase kinase, muscle variant"/>
</dbReference>
<dbReference type="ComplexPortal" id="CPX-674">
    <property type="entry name" value="Calcineurin-Calmodulin-AKAP5 complex, alpha-R1 variant"/>
</dbReference>
<dbReference type="ComplexPortal" id="CPX-902">
    <property type="entry name" value="Kv7.1 channel complex"/>
</dbReference>
<dbReference type="ComplexPortal" id="CPX-9141">
    <property type="entry name" value="Silencing factor of the integrated stress response complex"/>
</dbReference>
<dbReference type="ComplexPortal" id="CPX-9581">
    <property type="entry name" value="Phosphorylase kinase, liver variant"/>
</dbReference>
<dbReference type="ComplexPortal" id="CPX-998">
    <property type="entry name" value="Calcineurin-Calmodulin-AKAP5 complex, beta-R1 variant"/>
</dbReference>
<dbReference type="CORUM" id="P0DP25"/>
<dbReference type="FunCoup" id="P0DP25">
    <property type="interactions" value="3542"/>
</dbReference>
<dbReference type="IntAct" id="P0DP25">
    <property type="interactions" value="190"/>
</dbReference>
<dbReference type="DrugBank" id="DB08039">
    <property type="generic name" value="(3Z)-N,N-DIMETHYL-2-OXO-3-(4,5,6,7-TETRAHYDRO-1H-INDOL-2-YLMETHYLIDENE)-2,3-DIHYDRO-1H-INDOLE-5-SULFONAMIDE"/>
</dbReference>
<dbReference type="DrugBank" id="DB14511">
    <property type="generic name" value="Acetate"/>
</dbReference>
<dbReference type="DrugBank" id="DB01429">
    <property type="generic name" value="Aprindine"/>
</dbReference>
<dbReference type="DrugBank" id="DB01244">
    <property type="generic name" value="Bepridil"/>
</dbReference>
<dbReference type="DrugBank" id="DB01373">
    <property type="generic name" value="Calcium"/>
</dbReference>
<dbReference type="DrugBank" id="DB11093">
    <property type="generic name" value="Calcium citrate"/>
</dbReference>
<dbReference type="DrugBank" id="DB13800">
    <property type="generic name" value="Calcium levulinate"/>
</dbReference>
<dbReference type="DrugBank" id="DB11348">
    <property type="generic name" value="Calcium Phosphate"/>
</dbReference>
<dbReference type="DrugBank" id="DB14481">
    <property type="generic name" value="Calcium phosphate dihydrate"/>
</dbReference>
<dbReference type="DrugBank" id="DB00477">
    <property type="generic name" value="Chlorpromazine"/>
</dbReference>
<dbReference type="DrugBank" id="DB00527">
    <property type="generic name" value="Cinchocaine"/>
</dbReference>
<dbReference type="DrugBank" id="DB02868">
    <property type="generic name" value="Deacetoxyvinzolidine"/>
</dbReference>
<dbReference type="DrugBank" id="DB04209">
    <property type="generic name" value="Dequalinium"/>
</dbReference>
<dbReference type="DrugBank" id="DB01023">
    <property type="generic name" value="Felodipine"/>
</dbReference>
<dbReference type="DrugBank" id="DB04841">
    <property type="generic name" value="Flunarizine"/>
</dbReference>
<dbReference type="DrugBank" id="DB00623">
    <property type="generic name" value="Fluphenazine"/>
</dbReference>
<dbReference type="DrugBank" id="DB01218">
    <property type="generic name" value="Halofantrine"/>
</dbReference>
<dbReference type="DrugBank" id="DB00753">
    <property type="generic name" value="Isoflurane"/>
</dbReference>
<dbReference type="DrugBank" id="DB00836">
    <property type="generic name" value="Loperamide"/>
</dbReference>
<dbReference type="DrugBank" id="DB01065">
    <property type="generic name" value="Melatonin"/>
</dbReference>
<dbReference type="DrugBank" id="DB08231">
    <property type="generic name" value="Myristic acid"/>
</dbReference>
<dbReference type="DrugBank" id="DB04513">
    <property type="generic name" value="N-(6-Aminohexyl)-5-Chloro-1-Naphthalenesulfonamide"/>
</dbReference>
<dbReference type="DrugBank" id="DB00622">
    <property type="generic name" value="Nicardipine"/>
</dbReference>
<dbReference type="DrugBank" id="DB01115">
    <property type="generic name" value="Nifedipine"/>
</dbReference>
<dbReference type="DrugBank" id="DB00850">
    <property type="generic name" value="Perphenazine"/>
</dbReference>
<dbReference type="DrugBank" id="DB00925">
    <property type="generic name" value="Phenoxybenzamine"/>
</dbReference>
<dbReference type="DrugBank" id="DB01100">
    <property type="generic name" value="Pimozide"/>
</dbReference>
<dbReference type="DrugBank" id="DB04825">
    <property type="generic name" value="Prenylamine"/>
</dbReference>
<dbReference type="DrugBank" id="DB01069">
    <property type="generic name" value="Promethazine"/>
</dbReference>
<dbReference type="DrugBank" id="DB03900">
    <property type="generic name" value="tert-butanol"/>
</dbReference>
<dbReference type="DrugBank" id="DB00831">
    <property type="generic name" value="Trifluoperazine"/>
</dbReference>
<dbReference type="DrugBank" id="DB03977">
    <property type="generic name" value="Trimethyllysine"/>
</dbReference>
<dbReference type="DrugCentral" id="P0DP25"/>
<dbReference type="GlyGen" id="P0DP25">
    <property type="glycosylation" value="1 site, 1 O-linked glycan (1 site)"/>
</dbReference>
<dbReference type="iPTMnet" id="P0DP25"/>
<dbReference type="MetOSite" id="P0DP25"/>
<dbReference type="BioMuta" id="CALM3"/>
<dbReference type="jPOST" id="P0DP25"/>
<dbReference type="MassIVE" id="P0DP25"/>
<dbReference type="Pumba" id="P0DP25"/>
<dbReference type="Antibodypedia" id="39411">
    <property type="antibodies" value="192 antibodies from 17 providers"/>
</dbReference>
<dbReference type="DNASU" id="801"/>
<dbReference type="Ensembl" id="ENST00000291295.14">
    <property type="protein sequence ID" value="ENSP00000291295.8"/>
    <property type="gene ID" value="ENSG00000160014.17"/>
</dbReference>
<dbReference type="Ensembl" id="ENST00000596362.1">
    <property type="protein sequence ID" value="ENSP00000472141.1"/>
    <property type="gene ID" value="ENSG00000160014.17"/>
</dbReference>
<dbReference type="GeneID" id="801"/>
<dbReference type="GeneID" id="805"/>
<dbReference type="GeneID" id="808"/>
<dbReference type="KEGG" id="hsa:801"/>
<dbReference type="KEGG" id="hsa:805"/>
<dbReference type="KEGG" id="hsa:808"/>
<dbReference type="MANE-Select" id="ENST00000291295.14">
    <property type="protein sequence ID" value="ENSP00000291295.8"/>
    <property type="RefSeq nucleotide sequence ID" value="NM_005184.4"/>
    <property type="RefSeq protein sequence ID" value="NP_005175.2"/>
</dbReference>
<dbReference type="AGR" id="HGNC:1442"/>
<dbReference type="AGR" id="HGNC:1445"/>
<dbReference type="AGR" id="HGNC:1449"/>
<dbReference type="CTD" id="801"/>
<dbReference type="CTD" id="805"/>
<dbReference type="CTD" id="808"/>
<dbReference type="DisGeNET" id="801"/>
<dbReference type="DisGeNET" id="805"/>
<dbReference type="DisGeNET" id="808"/>
<dbReference type="GeneCards" id="CALM3"/>
<dbReference type="GeneReviews" id="CALM3"/>
<dbReference type="HGNC" id="HGNC:1449">
    <property type="gene designation" value="CALM3"/>
</dbReference>
<dbReference type="HPA" id="ENSG00000160014">
    <property type="expression patterns" value="Tissue enhanced (brain)"/>
</dbReference>
<dbReference type="MalaCards" id="CALM3"/>
<dbReference type="MIM" id="114183">
    <property type="type" value="gene"/>
</dbReference>
<dbReference type="MIM" id="618782">
    <property type="type" value="phenotype"/>
</dbReference>
<dbReference type="neXtProt" id="NX_P0DP25"/>
<dbReference type="OpenTargets" id="ENSG00000143933"/>
<dbReference type="OpenTargets" id="ENSG00000160014"/>
<dbReference type="OpenTargets" id="ENSG00000198668"/>
<dbReference type="Orphanet" id="3286">
    <property type="disease" value="Catecholaminergic polymorphic ventricular tachycardia"/>
</dbReference>
<dbReference type="Orphanet" id="101016">
    <property type="disease" value="Romano-Ward syndrome"/>
</dbReference>
<dbReference type="VEuPathDB" id="HostDB:ENSG00000160014"/>
<dbReference type="GeneTree" id="ENSGT00950000182980"/>
<dbReference type="InParanoid" id="P0DP25"/>
<dbReference type="OMA" id="RIDCESI"/>
<dbReference type="OrthoDB" id="9924840at2759"/>
<dbReference type="PAN-GO" id="P0DP25">
    <property type="GO annotations" value="3 GO annotations based on evolutionary models"/>
</dbReference>
<dbReference type="PathwayCommons" id="P0DP25"/>
<dbReference type="SignaLink" id="P0DP25"/>
<dbReference type="SIGNOR" id="P0DP25"/>
<dbReference type="BioGRID-ORCS" id="801">
    <property type="hits" value="10 hits in 1158 CRISPR screens"/>
</dbReference>
<dbReference type="BioGRID-ORCS" id="805">
    <property type="hits" value="38 hits in 1009 CRISPR screens"/>
</dbReference>
<dbReference type="BioGRID-ORCS" id="808">
    <property type="hits" value="46 hits in 1159 CRISPR screens"/>
</dbReference>
<dbReference type="ChiTaRS" id="CALM3">
    <property type="organism name" value="human"/>
</dbReference>
<dbReference type="Pharos" id="P0DP25">
    <property type="development level" value="Tclin"/>
</dbReference>
<dbReference type="PRO" id="PR:P0DP25"/>
<dbReference type="Proteomes" id="UP000005640">
    <property type="component" value="Chromosome 19"/>
</dbReference>
<dbReference type="RNAct" id="P0DP25">
    <property type="molecule type" value="protein"/>
</dbReference>
<dbReference type="Bgee" id="ENSG00000160014">
    <property type="expression patterns" value="Expressed in prefrontal cortex and 211 other cell types or tissues"/>
</dbReference>
<dbReference type="ExpressionAtlas" id="P0DP25">
    <property type="expression patterns" value="baseline and differential"/>
</dbReference>
<dbReference type="GO" id="GO:0034704">
    <property type="term" value="C:calcium channel complex"/>
    <property type="evidence" value="ECO:0000314"/>
    <property type="project" value="BHF-UCL"/>
</dbReference>
<dbReference type="GO" id="GO:0044305">
    <property type="term" value="C:calyx of Held"/>
    <property type="evidence" value="ECO:0007669"/>
    <property type="project" value="Ensembl"/>
</dbReference>
<dbReference type="GO" id="GO:1902494">
    <property type="term" value="C:catalytic complex"/>
    <property type="evidence" value="ECO:0000314"/>
    <property type="project" value="CAFA"/>
</dbReference>
<dbReference type="GO" id="GO:0005813">
    <property type="term" value="C:centrosome"/>
    <property type="evidence" value="ECO:0000314"/>
    <property type="project" value="UniProtKB"/>
</dbReference>
<dbReference type="GO" id="GO:0005737">
    <property type="term" value="C:cytoplasm"/>
    <property type="evidence" value="ECO:0000318"/>
    <property type="project" value="GO_Central"/>
</dbReference>
<dbReference type="GO" id="GO:0030426">
    <property type="term" value="C:growth cone"/>
    <property type="evidence" value="ECO:0007669"/>
    <property type="project" value="Ensembl"/>
</dbReference>
<dbReference type="GO" id="GO:0031966">
    <property type="term" value="C:mitochondrial membrane"/>
    <property type="evidence" value="ECO:0007669"/>
    <property type="project" value="Ensembl"/>
</dbReference>
<dbReference type="GO" id="GO:0043209">
    <property type="term" value="C:myelin sheath"/>
    <property type="evidence" value="ECO:0000318"/>
    <property type="project" value="GO_Central"/>
</dbReference>
<dbReference type="GO" id="GO:0005634">
    <property type="term" value="C:nucleus"/>
    <property type="evidence" value="ECO:0007005"/>
    <property type="project" value="UniProtKB"/>
</dbReference>
<dbReference type="GO" id="GO:0005886">
    <property type="term" value="C:plasma membrane"/>
    <property type="evidence" value="ECO:0000304"/>
    <property type="project" value="UniProtKB"/>
</dbReference>
<dbReference type="GO" id="GO:0099524">
    <property type="term" value="C:postsynaptic cytosol"/>
    <property type="evidence" value="ECO:0007669"/>
    <property type="project" value="Ensembl"/>
</dbReference>
<dbReference type="GO" id="GO:0099523">
    <property type="term" value="C:presynaptic cytosol"/>
    <property type="evidence" value="ECO:0007669"/>
    <property type="project" value="Ensembl"/>
</dbReference>
<dbReference type="GO" id="GO:0032991">
    <property type="term" value="C:protein-containing complex"/>
    <property type="evidence" value="ECO:0000314"/>
    <property type="project" value="CAFA"/>
</dbReference>
<dbReference type="GO" id="GO:0030017">
    <property type="term" value="C:sarcomere"/>
    <property type="evidence" value="ECO:0000314"/>
    <property type="project" value="BHF-UCL"/>
</dbReference>
<dbReference type="GO" id="GO:0098685">
    <property type="term" value="C:Schaffer collateral - CA1 synapse"/>
    <property type="evidence" value="ECO:0007669"/>
    <property type="project" value="Ensembl"/>
</dbReference>
<dbReference type="GO" id="GO:0097225">
    <property type="term" value="C:sperm midpiece"/>
    <property type="evidence" value="ECO:0007669"/>
    <property type="project" value="Ensembl"/>
</dbReference>
<dbReference type="GO" id="GO:0005876">
    <property type="term" value="C:spindle microtubule"/>
    <property type="evidence" value="ECO:0000314"/>
    <property type="project" value="UniProtKB"/>
</dbReference>
<dbReference type="GO" id="GO:0000922">
    <property type="term" value="C:spindle pole"/>
    <property type="evidence" value="ECO:0000314"/>
    <property type="project" value="UniProtKB"/>
</dbReference>
<dbReference type="GO" id="GO:0030672">
    <property type="term" value="C:synaptic vesicle membrane"/>
    <property type="evidence" value="ECO:0007669"/>
    <property type="project" value="Ensembl"/>
</dbReference>
<dbReference type="GO" id="GO:0031982">
    <property type="term" value="C:vesicle"/>
    <property type="evidence" value="ECO:0007005"/>
    <property type="project" value="UniProtKB"/>
</dbReference>
<dbReference type="GO" id="GO:0008076">
    <property type="term" value="C:voltage-gated potassium channel complex"/>
    <property type="evidence" value="ECO:0007669"/>
    <property type="project" value="Ensembl"/>
</dbReference>
<dbReference type="GO" id="GO:0010856">
    <property type="term" value="F:adenylate cyclase activator activity"/>
    <property type="evidence" value="ECO:0000314"/>
    <property type="project" value="UniProtKB"/>
</dbReference>
<dbReference type="GO" id="GO:0008179">
    <property type="term" value="F:adenylate cyclase binding"/>
    <property type="evidence" value="ECO:0000353"/>
    <property type="project" value="CAFA"/>
</dbReference>
<dbReference type="GO" id="GO:0005246">
    <property type="term" value="F:calcium channel regulator activity"/>
    <property type="evidence" value="ECO:0000314"/>
    <property type="project" value="BHF-UCL"/>
</dbReference>
<dbReference type="GO" id="GO:0005509">
    <property type="term" value="F:calcium ion binding"/>
    <property type="evidence" value="ECO:0000314"/>
    <property type="project" value="UniProtKB"/>
</dbReference>
<dbReference type="GO" id="GO:0048306">
    <property type="term" value="F:calcium-dependent protein binding"/>
    <property type="evidence" value="ECO:0007669"/>
    <property type="project" value="Ensembl"/>
</dbReference>
<dbReference type="GO" id="GO:0050998">
    <property type="term" value="F:nitric-oxide synthase binding"/>
    <property type="evidence" value="ECO:0007669"/>
    <property type="project" value="Ensembl"/>
</dbReference>
<dbReference type="GO" id="GO:0030235">
    <property type="term" value="F:nitric-oxide synthase regulator activity"/>
    <property type="evidence" value="ECO:0007669"/>
    <property type="project" value="Ensembl"/>
</dbReference>
<dbReference type="GO" id="GO:0043548">
    <property type="term" value="F:phosphatidylinositol 3-kinase binding"/>
    <property type="evidence" value="ECO:0007669"/>
    <property type="project" value="Ensembl"/>
</dbReference>
<dbReference type="GO" id="GO:0019904">
    <property type="term" value="F:protein domain specific binding"/>
    <property type="evidence" value="ECO:0007669"/>
    <property type="project" value="Ensembl"/>
</dbReference>
<dbReference type="GO" id="GO:0019901">
    <property type="term" value="F:protein kinase binding"/>
    <property type="evidence" value="ECO:0000353"/>
    <property type="project" value="BHF-UCL"/>
</dbReference>
<dbReference type="GO" id="GO:0072542">
    <property type="term" value="F:protein phosphatase activator activity"/>
    <property type="evidence" value="ECO:0000314"/>
    <property type="project" value="BHF-UCL"/>
</dbReference>
<dbReference type="GO" id="GO:0043539">
    <property type="term" value="F:protein serine/threonine kinase activator activity"/>
    <property type="evidence" value="ECO:0000314"/>
    <property type="project" value="UniProtKB"/>
</dbReference>
<dbReference type="GO" id="GO:0031432">
    <property type="term" value="F:titin binding"/>
    <property type="evidence" value="ECO:0000353"/>
    <property type="project" value="BHF-UCL"/>
</dbReference>
<dbReference type="GO" id="GO:0044325">
    <property type="term" value="F:transmembrane transporter binding"/>
    <property type="evidence" value="ECO:0000353"/>
    <property type="project" value="BHF-UCL"/>
</dbReference>
<dbReference type="GO" id="GO:0141110">
    <property type="term" value="F:transporter inhibitor activity"/>
    <property type="evidence" value="ECO:0007669"/>
    <property type="project" value="Ensembl"/>
</dbReference>
<dbReference type="GO" id="GO:0031800">
    <property type="term" value="F:type 3 metabotropic glutamate receptor binding"/>
    <property type="evidence" value="ECO:0007669"/>
    <property type="project" value="Ensembl"/>
</dbReference>
<dbReference type="GO" id="GO:0097720">
    <property type="term" value="P:calcineurin-mediated signaling"/>
    <property type="evidence" value="ECO:0000314"/>
    <property type="project" value="BHF-UCL"/>
</dbReference>
<dbReference type="GO" id="GO:0005513">
    <property type="term" value="P:detection of calcium ion"/>
    <property type="evidence" value="ECO:0000315"/>
    <property type="project" value="BHF-UCL"/>
</dbReference>
<dbReference type="GO" id="GO:0090151">
    <property type="term" value="P:establishment of protein localization to mitochondrial membrane"/>
    <property type="evidence" value="ECO:0007669"/>
    <property type="project" value="Ensembl"/>
</dbReference>
<dbReference type="GO" id="GO:0007186">
    <property type="term" value="P:G protein-coupled receptor signaling pathway"/>
    <property type="evidence" value="ECO:0000304"/>
    <property type="project" value="UniProtKB"/>
</dbReference>
<dbReference type="GO" id="GO:0000086">
    <property type="term" value="P:G2/M transition of mitotic cell cycle"/>
    <property type="evidence" value="ECO:0007669"/>
    <property type="project" value="Ensembl"/>
</dbReference>
<dbReference type="GO" id="GO:0060291">
    <property type="term" value="P:long-term synaptic potentiation"/>
    <property type="evidence" value="ECO:0000304"/>
    <property type="project" value="BHF-UCL"/>
</dbReference>
<dbReference type="GO" id="GO:1905913">
    <property type="term" value="P:negative regulation of calcium ion export across plasma membrane"/>
    <property type="evidence" value="ECO:0007669"/>
    <property type="project" value="Ensembl"/>
</dbReference>
<dbReference type="GO" id="GO:1901842">
    <property type="term" value="P:negative regulation of high voltage-gated calcium channel activity"/>
    <property type="evidence" value="ECO:0000315"/>
    <property type="project" value="UniProtKB"/>
</dbReference>
<dbReference type="GO" id="GO:0140238">
    <property type="term" value="P:presynaptic endocytosis"/>
    <property type="evidence" value="ECO:0007669"/>
    <property type="project" value="Ensembl"/>
</dbReference>
<dbReference type="GO" id="GO:0050848">
    <property type="term" value="P:regulation of calcium-mediated signaling"/>
    <property type="evidence" value="ECO:0007669"/>
    <property type="project" value="Ensembl"/>
</dbReference>
<dbReference type="GO" id="GO:0098901">
    <property type="term" value="P:regulation of cardiac muscle cell action potential"/>
    <property type="evidence" value="ECO:0000315"/>
    <property type="project" value="UniProtKB"/>
</dbReference>
<dbReference type="GO" id="GO:0055117">
    <property type="term" value="P:regulation of cardiac muscle contraction"/>
    <property type="evidence" value="ECO:0000315"/>
    <property type="project" value="BHF-UCL"/>
</dbReference>
<dbReference type="GO" id="GO:0010881">
    <property type="term" value="P:regulation of cardiac muscle contraction by regulation of the release of sequestered calcium ion"/>
    <property type="evidence" value="ECO:0000314"/>
    <property type="project" value="BHF-UCL"/>
</dbReference>
<dbReference type="GO" id="GO:1901844">
    <property type="term" value="P:regulation of cell communication by electrical coupling involved in cardiac conduction"/>
    <property type="evidence" value="ECO:0000305"/>
    <property type="project" value="BHF-UCL"/>
</dbReference>
<dbReference type="GO" id="GO:0032465">
    <property type="term" value="P:regulation of cytokinesis"/>
    <property type="evidence" value="ECO:0000315"/>
    <property type="project" value="UniProtKB"/>
</dbReference>
<dbReference type="GO" id="GO:0002027">
    <property type="term" value="P:regulation of heart rate"/>
    <property type="evidence" value="ECO:0000315"/>
    <property type="project" value="BHF-UCL"/>
</dbReference>
<dbReference type="GO" id="GO:0010880">
    <property type="term" value="P:regulation of release of sequestered calcium ion into cytosol by sarcoplasmic reticulum"/>
    <property type="evidence" value="ECO:0000314"/>
    <property type="project" value="BHF-UCL"/>
</dbReference>
<dbReference type="GO" id="GO:1900242">
    <property type="term" value="P:regulation of synaptic vesicle endocytosis"/>
    <property type="evidence" value="ECO:0007669"/>
    <property type="project" value="Ensembl"/>
</dbReference>
<dbReference type="GO" id="GO:2000300">
    <property type="term" value="P:regulation of synaptic vesicle exocytosis"/>
    <property type="evidence" value="ECO:0007669"/>
    <property type="project" value="Ensembl"/>
</dbReference>
<dbReference type="GO" id="GO:0001975">
    <property type="term" value="P:response to amphetamine"/>
    <property type="evidence" value="ECO:0007669"/>
    <property type="project" value="Ensembl"/>
</dbReference>
<dbReference type="GO" id="GO:0051592">
    <property type="term" value="P:response to calcium ion"/>
    <property type="evidence" value="ECO:0000314"/>
    <property type="project" value="BHF-UCL"/>
</dbReference>
<dbReference type="GO" id="GO:0051412">
    <property type="term" value="P:response to corticosterone"/>
    <property type="evidence" value="ECO:0007669"/>
    <property type="project" value="Ensembl"/>
</dbReference>
<dbReference type="GO" id="GO:0021762">
    <property type="term" value="P:substantia nigra development"/>
    <property type="evidence" value="ECO:0007007"/>
    <property type="project" value="UniProtKB"/>
</dbReference>
<dbReference type="CDD" id="cd00051">
    <property type="entry name" value="EFh"/>
    <property type="match status" value="2"/>
</dbReference>
<dbReference type="FunFam" id="1.10.238.10:FF:000527">
    <property type="entry name" value="Calmodulin-3"/>
    <property type="match status" value="1"/>
</dbReference>
<dbReference type="Gene3D" id="1.10.238.10">
    <property type="entry name" value="EF-hand"/>
    <property type="match status" value="3"/>
</dbReference>
<dbReference type="InterPro" id="IPR050230">
    <property type="entry name" value="CALM/Myosin/TropC-like"/>
</dbReference>
<dbReference type="InterPro" id="IPR011992">
    <property type="entry name" value="EF-hand-dom_pair"/>
</dbReference>
<dbReference type="InterPro" id="IPR018247">
    <property type="entry name" value="EF_Hand_1_Ca_BS"/>
</dbReference>
<dbReference type="InterPro" id="IPR002048">
    <property type="entry name" value="EF_hand_dom"/>
</dbReference>
<dbReference type="PANTHER" id="PTHR23048:SF0">
    <property type="entry name" value="CALMODULIN LIKE 3"/>
    <property type="match status" value="1"/>
</dbReference>
<dbReference type="PANTHER" id="PTHR23048">
    <property type="entry name" value="MYOSIN LIGHT CHAIN 1, 3"/>
    <property type="match status" value="1"/>
</dbReference>
<dbReference type="Pfam" id="PF13499">
    <property type="entry name" value="EF-hand_7"/>
    <property type="match status" value="2"/>
</dbReference>
<dbReference type="PRINTS" id="PR00450">
    <property type="entry name" value="RECOVERIN"/>
</dbReference>
<dbReference type="SMART" id="SM00054">
    <property type="entry name" value="EFh"/>
    <property type="match status" value="4"/>
</dbReference>
<dbReference type="SUPFAM" id="SSF47473">
    <property type="entry name" value="EF-hand"/>
    <property type="match status" value="1"/>
</dbReference>
<dbReference type="PROSITE" id="PS00018">
    <property type="entry name" value="EF_HAND_1"/>
    <property type="match status" value="4"/>
</dbReference>
<dbReference type="PROSITE" id="PS50222">
    <property type="entry name" value="EF_HAND_2"/>
    <property type="match status" value="4"/>
</dbReference>
<name>CALM3_HUMAN</name>
<organism>
    <name type="scientific">Homo sapiens</name>
    <name type="common">Human</name>
    <dbReference type="NCBI Taxonomy" id="9606"/>
    <lineage>
        <taxon>Eukaryota</taxon>
        <taxon>Metazoa</taxon>
        <taxon>Chordata</taxon>
        <taxon>Craniata</taxon>
        <taxon>Vertebrata</taxon>
        <taxon>Euteleostomi</taxon>
        <taxon>Mammalia</taxon>
        <taxon>Eutheria</taxon>
        <taxon>Euarchontoglires</taxon>
        <taxon>Primates</taxon>
        <taxon>Haplorrhini</taxon>
        <taxon>Catarrhini</taxon>
        <taxon>Hominidae</taxon>
        <taxon>Homo</taxon>
    </lineage>
</organism>
<comment type="function">
    <text evidence="13 24 27">Calmodulin acts as part of a calcium signal transduction pathway by mediating the control of a large number of enzymes, ion channels, aquaporins and other proteins through calcium-binding (PubMed:16760425, PubMed:31454269). Calcium-binding is required for the activation of calmodulin (PubMed:16760425, PubMed:31454269, PubMed:35568036). Among the enzymes to be stimulated by the calmodulin-calcium complex are a number of protein kinases, such as myosin light-chain kinases and calmodulin-dependent protein kinase type II (CaMK2), and phosphatases (PubMed:16760425, PubMed:35568036). Together with CCP110 and centrin, is involved in a genetic pathway that regulates the centrosome cycle and progression through cytokinesis (PubMed:16760425).</text>
</comment>
<comment type="function">
    <text evidence="25 26 28 29">(Microbial infection) Required for C.violaceum CopC and S.flexneri OspC3 arginine ADP-riboxanase activity.</text>
</comment>
<comment type="activity regulation">
    <text evidence="27">(Microbial infection) Inactivated by S.flexneri OspC1 and OspC3 proteins, which specifically bind the apo-form of calmodulin, thereby preventing calcium-binding and activity.</text>
</comment>
<comment type="subunit">
    <text evidence="2 4 5 6 8 11 12 13 14 15 16 17 18 20 21 22 23 30 32">Interacts with MYO1C, MYO5A and RRAD. Interacts with MYO10 (By similarity). Interacts with CEP97, CCP110, TTN/titin and SRY (PubMed:12871148, PubMed:15746192, PubMed:16760425, PubMed:17719545, PubMed:9804419). Interacts with USP6; the interaction is calcium dependent (PubMed:16127172). Interacts with CDK5RAP2 (PubMed:20466722). Interacts with SCN5A (By similarity). Interacts with RYR1 (PubMed:18650434). Interacts with FCHO1 (PubMed:22484487). Interacts with MIP in a 1:2 stoichiometry; the interaction with the cytoplasmic domains from two MIP subunits promotes MIP water channel closure (By similarity). Interacts with ORAI1; this may play a role in the regulation of ORAI1-mediated calcium transport (By similarity). Interacts with IQCF1 (By similarity). Interacts with SYT7 (By similarity). Interacts with CEACAM1 (via cytoplasmic domain); this interaction is in a calcium dependent manner and reduces homophilic cell adhesion through dissociation of dimer (By similarity). Interacts with RYR2; regulates RYR2 calcium-release channel activity (PubMed:18650434, PubMed:27516456). Interacts with PCP4; regulates calmodulin calcium-binding (PubMed:27876793). Interacts with the heterotetrameric KCNQ2 and KCNQ3 channel; the interaction is calcium-independent, constitutive and participates in the proper assembly of a functional heterotetrameric M channel (PubMed:27564677). Component of the SIFI complex (PubMed:25582440, PubMed:38297121).</text>
</comment>
<comment type="subunit">
    <text evidence="25 26 28">(Microbial infection) Interacts with C.violaceum CopC (PubMed:35338844, PubMed:35446120, PubMed:36423631). C.violaceum CopC interacts specifically with the apo form of calmodulin (PubMed:35446120, PubMed:36423631).</text>
</comment>
<comment type="subunit">
    <text evidence="27 29">(Microbial infection) Interacts with S.flexneri OspC1 and OspC3 (PubMed:35568036, PubMed:36624349). S.flexneri OspC1 and OspC3 interact specifically with the apo form of calmodulin and prevents calcium-binding (PubMed:35568036).</text>
</comment>
<comment type="interaction">
    <interactant intactId="EBI-52319544">
        <id>P0DP25</id>
    </interactant>
    <interactant intactId="EBI-350423">
        <id>O00159</id>
        <label>MYO1C</label>
    </interactant>
    <organismsDiffer>false</organismsDiffer>
    <experiments>2</experiments>
</comment>
<comment type="subcellular location">
    <subcellularLocation>
        <location evidence="13">Cytoplasm</location>
        <location evidence="13">Cytoskeleton</location>
        <location evidence="13">Spindle</location>
    </subcellularLocation>
    <subcellularLocation>
        <location evidence="13">Cytoplasm</location>
        <location evidence="13">Cytoskeleton</location>
        <location evidence="13">Spindle pole</location>
    </subcellularLocation>
    <subcellularLocation>
        <location evidence="9">Cytoplasm</location>
        <location evidence="9">Cytoskeleton</location>
        <location evidence="9">Microtubule organizing center</location>
        <location evidence="9">Centrosome</location>
    </subcellularLocation>
    <text>Distributed throughout the cell during interphase, but during mitosis becomes dramatically localized to the spindle poles and the spindle microtubules.</text>
</comment>
<comment type="PTM">
    <text evidence="1">Ubiquitination results in a strongly decreased activity.</text>
</comment>
<comment type="PTM">
    <text evidence="1">Phosphorylation results in a decreased activity.</text>
</comment>
<comment type="disease" evidence="21">
    <disease id="DI-05767">
        <name>Ventricular tachycardia, catecholaminergic polymorphic, 6</name>
        <acronym>CPVT6</acronym>
        <description>An arrhythmogenic disorder characterized by stress-induced, bidirectional ventricular tachycardia that may degenerate into cardiac arrest and cause sudden death. Patients present with recurrent syncope, seizures, or sudden death after physical activity or emotional stress. CPVT6 inheritance is autosomal dominant.</description>
        <dbReference type="MIM" id="618782"/>
    </disease>
    <text>The disease may be caused by variants affecting the gene represented in this entry.</text>
</comment>
<comment type="disease" evidence="19 24">
    <disease id="DI-05766">
        <name>Long QT syndrome 16</name>
        <acronym>LQT16</acronym>
        <description>An autosomal dominant form of long QT syndrome, a heart disorder characterized by a prolonged QT interval on the ECG and polymorphic ventricular arrhythmias. They cause syncope and sudden death in response to exercise or emotional stress, and can present with a sentinel event of sudden cardiac death in infancy.</description>
        <dbReference type="MIM" id="618782"/>
    </disease>
    <text>The disease is caused by variants affecting the gene represented in this entry.</text>
</comment>
<comment type="miscellaneous">
    <text evidence="10">This protein has four functional calcium-binding sites.</text>
</comment>
<comment type="similarity">
    <text evidence="34">Belongs to the calmodulin family.</text>
</comment>
<comment type="sequence caution" evidence="34">
    <conflict type="erroneous gene model prediction">
        <sequence resource="EMBL-CDS" id="CAA36839"/>
    </conflict>
</comment>
<evidence type="ECO:0000250" key="1"/>
<evidence type="ECO:0000250" key="2">
    <source>
        <dbReference type="UniProtKB" id="P0DP23"/>
    </source>
</evidence>
<evidence type="ECO:0000250" key="3">
    <source>
        <dbReference type="UniProtKB" id="P0DP31"/>
    </source>
</evidence>
<evidence type="ECO:0000250" key="4">
    <source>
        <dbReference type="UniProtKB" id="P62157"/>
    </source>
</evidence>
<evidence type="ECO:0000250" key="5">
    <source>
        <dbReference type="UniProtKB" id="P62161"/>
    </source>
</evidence>
<evidence type="ECO:0000250" key="6">
    <source>
        <dbReference type="UniProtKB" id="P62204"/>
    </source>
</evidence>
<evidence type="ECO:0000255" key="7">
    <source>
        <dbReference type="PROSITE-ProRule" id="PRU00448"/>
    </source>
</evidence>
<evidence type="ECO:0000269" key="8">
    <source>
    </source>
</evidence>
<evidence type="ECO:0000269" key="9">
    <source>
    </source>
</evidence>
<evidence type="ECO:0000269" key="10">
    <source>
    </source>
</evidence>
<evidence type="ECO:0000269" key="11">
    <source>
    </source>
</evidence>
<evidence type="ECO:0000269" key="12">
    <source>
    </source>
</evidence>
<evidence type="ECO:0000269" key="13">
    <source>
    </source>
</evidence>
<evidence type="ECO:0000269" key="14">
    <source>
    </source>
</evidence>
<evidence type="ECO:0000269" key="15">
    <source>
    </source>
</evidence>
<evidence type="ECO:0000269" key="16">
    <source>
    </source>
</evidence>
<evidence type="ECO:0000269" key="17">
    <source>
    </source>
</evidence>
<evidence type="ECO:0000269" key="18">
    <source>
    </source>
</evidence>
<evidence type="ECO:0000269" key="19">
    <source>
    </source>
</evidence>
<evidence type="ECO:0000269" key="20">
    <source>
    </source>
</evidence>
<evidence type="ECO:0000269" key="21">
    <source>
    </source>
</evidence>
<evidence type="ECO:0000269" key="22">
    <source>
    </source>
</evidence>
<evidence type="ECO:0000269" key="23">
    <source>
    </source>
</evidence>
<evidence type="ECO:0000269" key="24">
    <source>
    </source>
</evidence>
<evidence type="ECO:0000269" key="25">
    <source>
    </source>
</evidence>
<evidence type="ECO:0000269" key="26">
    <source>
    </source>
</evidence>
<evidence type="ECO:0000269" key="27">
    <source>
    </source>
</evidence>
<evidence type="ECO:0000269" key="28">
    <source>
    </source>
</evidence>
<evidence type="ECO:0000269" key="29">
    <source>
    </source>
</evidence>
<evidence type="ECO:0000269" key="30">
    <source>
    </source>
</evidence>
<evidence type="ECO:0000269" key="31">
    <source>
    </source>
</evidence>
<evidence type="ECO:0000269" key="32">
    <source>
    </source>
</evidence>
<evidence type="ECO:0000269" key="33">
    <source ref="7"/>
</evidence>
<evidence type="ECO:0000305" key="34"/>
<evidence type="ECO:0000312" key="35">
    <source>
        <dbReference type="HGNC" id="HGNC:1449"/>
    </source>
</evidence>
<evidence type="ECO:0007744" key="36">
    <source>
    </source>
</evidence>
<evidence type="ECO:0007744" key="37">
    <source>
    </source>
</evidence>
<evidence type="ECO:0007744" key="38">
    <source>
    </source>
</evidence>
<evidence type="ECO:0007744" key="39">
    <source>
    </source>
</evidence>
<evidence type="ECO:0007744" key="40">
    <source>
    </source>
</evidence>
<evidence type="ECO:0007744" key="41">
    <source>
    </source>
</evidence>
<evidence type="ECO:0007744" key="42">
    <source>
    </source>
</evidence>
<evidence type="ECO:0007744" key="43">
    <source>
    </source>
</evidence>
<evidence type="ECO:0007744" key="44">
    <source>
    </source>
</evidence>
<evidence type="ECO:0007744" key="45">
    <source>
    </source>
</evidence>
<evidence type="ECO:0007744" key="46">
    <source>
    </source>
</evidence>
<evidence type="ECO:0007744" key="47">
    <source>
    </source>
</evidence>
<evidence type="ECO:0007829" key="48">
    <source>
        <dbReference type="PDB" id="6K67"/>
    </source>
</evidence>
<evidence type="ECO:0007829" key="49">
    <source>
        <dbReference type="PDB" id="7BYL"/>
    </source>
</evidence>
<evidence type="ECO:0007829" key="50">
    <source>
        <dbReference type="PDB" id="7XNN"/>
    </source>
</evidence>
<accession>P0DP25</accession>
<accession>P02593</accession>
<accession>P62158</accession>
<accession>P70667</accession>
<accession>P99014</accession>
<accession>Q13942</accession>
<accession>Q53S29</accession>
<accession>Q61379</accession>
<accession>Q61380</accession>
<accession>Q96HK3</accession>
<proteinExistence type="evidence at protein level"/>
<reference key="1">
    <citation type="journal article" date="1988" name="J. Biol. Chem.">
        <title>Multiple divergent mRNAs code for a single human calmodulin.</title>
        <authorList>
            <person name="Fischer R."/>
            <person name="Koller M."/>
            <person name="Flura M."/>
            <person name="Mathews S."/>
            <person name="Strehler-Page M.A."/>
            <person name="Krebs J."/>
            <person name="Penniston J.T."/>
            <person name="Carafoli E."/>
            <person name="Strehler E.E."/>
        </authorList>
    </citation>
    <scope>NUCLEOTIDE SEQUENCE [MRNA]</scope>
</reference>
<reference key="2">
    <citation type="journal article" date="1990" name="Biochim. Biophys. Acta">
        <title>Structural organization of the human CaMIII calmodulin gene.</title>
        <authorList>
            <person name="Koller M."/>
            <person name="Schnyder B."/>
            <person name="Strehler E.E."/>
        </authorList>
    </citation>
    <scope>NUCLEOTIDE SEQUENCE [GENOMIC DNA]</scope>
    <source>
        <tissue>Blood</tissue>
    </source>
</reference>
<reference key="3">
    <citation type="submission" date="2003-05" db="EMBL/GenBank/DDBJ databases">
        <title>Cloning of human full-length CDSs in BD Creator(TM) system donor vector.</title>
        <authorList>
            <person name="Kalnine N."/>
            <person name="Chen X."/>
            <person name="Rolfs A."/>
            <person name="Halleck A."/>
            <person name="Hines L."/>
            <person name="Eisenstein S."/>
            <person name="Koundinya M."/>
            <person name="Raphael J."/>
            <person name="Moreira D."/>
            <person name="Kelley T."/>
            <person name="LaBaer J."/>
            <person name="Lin Y."/>
            <person name="Phelan M."/>
            <person name="Farmer A."/>
        </authorList>
    </citation>
    <scope>NUCLEOTIDE SEQUENCE [LARGE SCALE MRNA]</scope>
</reference>
<reference key="4">
    <citation type="journal article" date="2004" name="Nature">
        <title>The DNA sequence and biology of human chromosome 19.</title>
        <authorList>
            <person name="Grimwood J."/>
            <person name="Gordon L.A."/>
            <person name="Olsen A.S."/>
            <person name="Terry A."/>
            <person name="Schmutz J."/>
            <person name="Lamerdin J.E."/>
            <person name="Hellsten U."/>
            <person name="Goodstein D."/>
            <person name="Couronne O."/>
            <person name="Tran-Gyamfi M."/>
            <person name="Aerts A."/>
            <person name="Altherr M."/>
            <person name="Ashworth L."/>
            <person name="Bajorek E."/>
            <person name="Black S."/>
            <person name="Branscomb E."/>
            <person name="Caenepeel S."/>
            <person name="Carrano A.V."/>
            <person name="Caoile C."/>
            <person name="Chan Y.M."/>
            <person name="Christensen M."/>
            <person name="Cleland C.A."/>
            <person name="Copeland A."/>
            <person name="Dalin E."/>
            <person name="Dehal P."/>
            <person name="Denys M."/>
            <person name="Detter J.C."/>
            <person name="Escobar J."/>
            <person name="Flowers D."/>
            <person name="Fotopulos D."/>
            <person name="Garcia C."/>
            <person name="Georgescu A.M."/>
            <person name="Glavina T."/>
            <person name="Gomez M."/>
            <person name="Gonzales E."/>
            <person name="Groza M."/>
            <person name="Hammon N."/>
            <person name="Hawkins T."/>
            <person name="Haydu L."/>
            <person name="Ho I."/>
            <person name="Huang W."/>
            <person name="Israni S."/>
            <person name="Jett J."/>
            <person name="Kadner K."/>
            <person name="Kimball H."/>
            <person name="Kobayashi A."/>
            <person name="Larionov V."/>
            <person name="Leem S.-H."/>
            <person name="Lopez F."/>
            <person name="Lou Y."/>
            <person name="Lowry S."/>
            <person name="Malfatti S."/>
            <person name="Martinez D."/>
            <person name="McCready P.M."/>
            <person name="Medina C."/>
            <person name="Morgan J."/>
            <person name="Nelson K."/>
            <person name="Nolan M."/>
            <person name="Ovcharenko I."/>
            <person name="Pitluck S."/>
            <person name="Pollard M."/>
            <person name="Popkie A.P."/>
            <person name="Predki P."/>
            <person name="Quan G."/>
            <person name="Ramirez L."/>
            <person name="Rash S."/>
            <person name="Retterer J."/>
            <person name="Rodriguez A."/>
            <person name="Rogers S."/>
            <person name="Salamov A."/>
            <person name="Salazar A."/>
            <person name="She X."/>
            <person name="Smith D."/>
            <person name="Slezak T."/>
            <person name="Solovyev V."/>
            <person name="Thayer N."/>
            <person name="Tice H."/>
            <person name="Tsai M."/>
            <person name="Ustaszewska A."/>
            <person name="Vo N."/>
            <person name="Wagner M."/>
            <person name="Wheeler J."/>
            <person name="Wu K."/>
            <person name="Xie G."/>
            <person name="Yang J."/>
            <person name="Dubchak I."/>
            <person name="Furey T.S."/>
            <person name="DeJong P."/>
            <person name="Dickson M."/>
            <person name="Gordon D."/>
            <person name="Eichler E.E."/>
            <person name="Pennacchio L.A."/>
            <person name="Richardson P."/>
            <person name="Stubbs L."/>
            <person name="Rokhsar D.S."/>
            <person name="Myers R.M."/>
            <person name="Rubin E.M."/>
            <person name="Lucas S.M."/>
        </authorList>
    </citation>
    <scope>NUCLEOTIDE SEQUENCE [LARGE SCALE GENOMIC DNA]</scope>
</reference>
<reference key="5">
    <citation type="journal article" date="2004" name="Genome Res.">
        <title>The status, quality, and expansion of the NIH full-length cDNA project: the Mammalian Gene Collection (MGC).</title>
        <authorList>
            <consortium name="The MGC Project Team"/>
        </authorList>
    </citation>
    <scope>NUCLEOTIDE SEQUENCE [LARGE SCALE MRNA]</scope>
    <source>
        <tissue>Brain</tissue>
        <tissue>Lung</tissue>
        <tissue>Lymph</tissue>
        <tissue>Placenta</tissue>
        <tissue>Urinary bladder</tissue>
    </source>
</reference>
<reference key="6">
    <citation type="journal article" date="1982" name="Biochemistry">
        <title>Complete amino acid sequence of human brain calmodulin.</title>
        <authorList>
            <person name="Sasagawa T."/>
            <person name="Ericsson L.H."/>
            <person name="Walsh K.A."/>
            <person name="Schreiber W.E."/>
            <person name="Fischer E.H."/>
            <person name="Titani K."/>
        </authorList>
    </citation>
    <scope>PROTEIN SEQUENCE OF 2-149</scope>
    <scope>ACETYLATION AT ALA-2</scope>
    <scope>METHYLATION AT LYS-116</scope>
    <source>
        <tissue>Brain</tissue>
    </source>
</reference>
<reference key="7">
    <citation type="submission" date="2008-02" db="UniProtKB">
        <authorList>
            <person name="Bienvenut W.V."/>
            <person name="Bensaad K."/>
            <person name="Vousden K.H."/>
        </authorList>
    </citation>
    <scope>PROTEIN SEQUENCE OF 2-31 AND 92-107</scope>
    <scope>CLEAVAGE OF INITIATOR METHIONINE</scope>
    <scope>ACETYLATION AT ALA-2</scope>
    <scope>IDENTIFICATION BY MASS SPECTROMETRY</scope>
    <source>
        <tissue>Osteosarcoma</tissue>
    </source>
</reference>
<reference key="8">
    <citation type="submission" date="2008-12" db="UniProtKB">
        <authorList>
            <person name="Lubec G."/>
            <person name="Afjehi-Sadat L."/>
            <person name="Chen W.-Q."/>
            <person name="Sun Y."/>
        </authorList>
    </citation>
    <scope>PROTEIN SEQUENCE OF 15-31; 77-107 AND 128-149</scope>
    <scope>IDENTIFICATION BY MASS SPECTROMETRY</scope>
    <source>
        <tissue>Brain</tissue>
        <tissue>Cajal-Retzius cell</tissue>
        <tissue>Fetal brain cortex</tissue>
    </source>
</reference>
<reference key="9">
    <citation type="journal article" date="1992" name="J. Mol. Biol.">
        <title>Calmodulin structure refined at 1.7 A resolution.</title>
        <authorList>
            <person name="Chattopadhyaya R."/>
            <person name="Meador W.E."/>
            <person name="Means A.R."/>
            <person name="Quiocho F.A."/>
        </authorList>
    </citation>
    <scope>CALCIUM-BINDING SITES</scope>
</reference>
<reference key="10">
    <citation type="journal article" date="1998" name="Nature">
        <title>Structural basis for activation of the titin kinase domain during myofibrillogenesis.</title>
        <authorList>
            <person name="Mayans O."/>
            <person name="van der Ven P.F.M."/>
            <person name="Wilm M."/>
            <person name="Mues A."/>
            <person name="Young P."/>
            <person name="Furst D.O."/>
            <person name="Wilmanns M."/>
            <person name="Gautel M."/>
        </authorList>
    </citation>
    <scope>INTERACTION WITH TTN</scope>
</reference>
<reference key="11">
    <citation type="journal article" date="2003" name="Nature">
        <title>Proteomic characterization of the human centrosome by protein correlation profiling.</title>
        <authorList>
            <person name="Andersen J.S."/>
            <person name="Wilkinson C.J."/>
            <person name="Mayor T."/>
            <person name="Mortensen P."/>
            <person name="Nigg E.A."/>
            <person name="Mann M."/>
        </authorList>
    </citation>
    <scope>IDENTIFICATION BY MASS SPECTROMETRY</scope>
    <scope>SUBCELLULAR LOCATION [LARGE SCALE ANALYSIS]</scope>
    <source>
        <tissue>Lymphoblast</tissue>
    </source>
</reference>
<reference key="12">
    <citation type="journal article" date="2003" name="Protein Pept. Lett.">
        <title>Recombinant expression, purification and characterisation of the HMG domain of human SRY.</title>
        <authorList>
            <person name="Kelly S."/>
            <person name="Yotis J."/>
            <person name="Macris M."/>
            <person name="Harley V."/>
        </authorList>
    </citation>
    <scope>INTERACTION WITH SRY</scope>
</reference>
<reference key="13">
    <citation type="journal article" date="2005" name="J. Biol. Chem.">
        <title>Calcium/calmodulin regulates ubiquitination of the ubiquitin-specific protease TRE17/USP6.</title>
        <authorList>
            <person name="Shen C."/>
            <person name="Ye Y."/>
            <person name="Robertson S.E."/>
            <person name="Lau A.W."/>
            <person name="Mak D.O."/>
            <person name="Chou M.M."/>
        </authorList>
    </citation>
    <scope>INTERACTION WITH USP6</scope>
</reference>
<reference key="14">
    <citation type="journal article" date="2005" name="Mol. Endocrinol.">
        <title>Defective calmodulin-mediated nuclear transport of the sex-determining region of the Y chromosome (SRY) in XY sex reversal.</title>
        <authorList>
            <person name="Sim H."/>
            <person name="Rimmer K."/>
            <person name="Kelly S."/>
            <person name="Ludbrook L.M."/>
            <person name="Clayton A.H."/>
            <person name="Harley V.R."/>
        </authorList>
    </citation>
    <scope>INTERACTION WITH SRY</scope>
</reference>
<reference key="15">
    <citation type="journal article" date="2005" name="Nat. Biotechnol.">
        <title>Immunoaffinity profiling of tyrosine phosphorylation in cancer cells.</title>
        <authorList>
            <person name="Rush J."/>
            <person name="Moritz A."/>
            <person name="Lee K.A."/>
            <person name="Guo A."/>
            <person name="Goss V.L."/>
            <person name="Spek E.J."/>
            <person name="Zhang H."/>
            <person name="Zha X.-M."/>
            <person name="Polakiewicz R.D."/>
            <person name="Comb M.J."/>
        </authorList>
    </citation>
    <scope>IDENTIFICATION BY MASS SPECTROMETRY [LARGE SCALE ANALYSIS]</scope>
</reference>
<reference key="16">
    <citation type="journal article" date="2006" name="Mol. Biol. Cell">
        <title>CP110 cooperates with two calcium-binding proteins to regulate cytokinesis and genome stability.</title>
        <authorList>
            <person name="Tsang W.Y."/>
            <person name="Spektor A."/>
            <person name="Luciano D.J."/>
            <person name="Indjeian V.B."/>
            <person name="Chen Z."/>
            <person name="Salisbury J.L."/>
            <person name="Sanchez I."/>
            <person name="Dynlacht B.D."/>
        </authorList>
    </citation>
    <scope>FUNCTION</scope>
    <scope>INTERACTION WITH CCP110</scope>
    <scope>SUBCELLULAR LOCATION</scope>
</reference>
<reference key="17">
    <citation type="journal article" date="2007" name="Cell">
        <title>Cep97 and CP110 suppress a cilia assembly program.</title>
        <authorList>
            <person name="Spektor A."/>
            <person name="Tsang W.Y."/>
            <person name="Khoo D."/>
            <person name="Dynlacht B.D."/>
        </authorList>
    </citation>
    <scope>INTERACTION WITH CEP97 AND CCP110</scope>
</reference>
<reference key="18">
    <citation type="journal article" date="2008" name="J. Biol. Chem.">
        <title>S100A1 and calmodulin compete for the same binding site on ryanodine receptor.</title>
        <authorList>
            <person name="Wright N.T."/>
            <person name="Prosser B.L."/>
            <person name="Varney K.M."/>
            <person name="Zimmer D.B."/>
            <person name="Schneider M.F."/>
            <person name="Weber D.J."/>
        </authorList>
    </citation>
    <scope>INTERACTION WITH RYR1 AND RYR2</scope>
</reference>
<reference key="19">
    <citation type="journal article" date="2008" name="Proc. Natl. Acad. Sci. U.S.A.">
        <title>A quantitative atlas of mitotic phosphorylation.</title>
        <authorList>
            <person name="Dephoure N."/>
            <person name="Zhou C."/>
            <person name="Villen J."/>
            <person name="Beausoleil S.A."/>
            <person name="Bakalarski C.E."/>
            <person name="Elledge S.J."/>
            <person name="Gygi S.P."/>
        </authorList>
    </citation>
    <scope>PHOSPHORYLATION [LARGE SCALE ANALYSIS] AT TYR-100</scope>
    <scope>IDENTIFICATION BY MASS SPECTROMETRY [LARGE SCALE ANALYSIS]</scope>
    <source>
        <tissue>Cervix carcinoma</tissue>
    </source>
</reference>
<reference key="20">
    <citation type="journal article" date="2009" name="Anal. Chem.">
        <title>Lys-N and trypsin cover complementary parts of the phosphoproteome in a refined SCX-based approach.</title>
        <authorList>
            <person name="Gauci S."/>
            <person name="Helbig A.O."/>
            <person name="Slijper M."/>
            <person name="Krijgsveld J."/>
            <person name="Heck A.J."/>
            <person name="Mohammed S."/>
        </authorList>
    </citation>
    <scope>ACETYLATION [LARGE SCALE ANALYSIS] AT ALA-2</scope>
    <scope>CLEAVAGE OF INITIATOR METHIONINE [LARGE SCALE ANALYSIS]</scope>
    <scope>IDENTIFICATION BY MASS SPECTROMETRY [LARGE SCALE ANALYSIS]</scope>
</reference>
<reference key="21">
    <citation type="journal article" date="2009" name="Sci. Signal.">
        <title>Quantitative phosphoproteomic analysis of T cell receptor signaling reveals system-wide modulation of protein-protein interactions.</title>
        <authorList>
            <person name="Mayya V."/>
            <person name="Lundgren D.H."/>
            <person name="Hwang S.-I."/>
            <person name="Rezaul K."/>
            <person name="Wu L."/>
            <person name="Eng J.K."/>
            <person name="Rodionov V."/>
            <person name="Han D.K."/>
        </authorList>
    </citation>
    <scope>PHOSPHORYLATION [LARGE SCALE ANALYSIS] AT TYR-100 AND TYR-139</scope>
    <scope>IDENTIFICATION BY MASS SPECTROMETRY [LARGE SCALE ANALYSIS]</scope>
    <source>
        <tissue>Leukemic T-cell</tissue>
    </source>
</reference>
<reference key="22">
    <citation type="journal article" date="2009" name="Science">
        <title>Lysine acetylation targets protein complexes and co-regulates major cellular functions.</title>
        <authorList>
            <person name="Choudhary C."/>
            <person name="Kumar C."/>
            <person name="Gnad F."/>
            <person name="Nielsen M.L."/>
            <person name="Rehman M."/>
            <person name="Walther T.C."/>
            <person name="Olsen J.V."/>
            <person name="Mann M."/>
        </authorList>
    </citation>
    <scope>ACETYLATION [LARGE SCALE ANALYSIS] AT LYS-22 AND LYS-95</scope>
    <scope>IDENTIFICATION BY MASS SPECTROMETRY [LARGE SCALE ANALYSIS]</scope>
</reference>
<reference key="23">
    <citation type="journal article" date="2010" name="J. Biol. Chem.">
        <title>Conserved motif of CDK5RAP2 mediates its localization to centrosomes and the Golgi complex.</title>
        <authorList>
            <person name="Wang Z."/>
            <person name="Wu T."/>
            <person name="Shi L."/>
            <person name="Zhang L."/>
            <person name="Zheng W."/>
            <person name="Qu J.Y."/>
            <person name="Niu R."/>
            <person name="Qi R.Z."/>
        </authorList>
    </citation>
    <scope>INTERACTION WITH CDK5RAP2</scope>
</reference>
<reference key="24">
    <citation type="journal article" date="2011" name="BMC Syst. Biol.">
        <title>Initial characterization of the human central proteome.</title>
        <authorList>
            <person name="Burkard T.R."/>
            <person name="Planyavsky M."/>
            <person name="Kaupe I."/>
            <person name="Breitwieser F.P."/>
            <person name="Buerckstuemmer T."/>
            <person name="Bennett K.L."/>
            <person name="Superti-Furga G."/>
            <person name="Colinge J."/>
        </authorList>
    </citation>
    <scope>IDENTIFICATION BY MASS SPECTROMETRY [LARGE SCALE ANALYSIS]</scope>
</reference>
<reference key="25">
    <citation type="journal article" date="2011" name="Sci. Signal.">
        <title>System-wide temporal characterization of the proteome and phosphoproteome of human embryonic stem cell differentiation.</title>
        <authorList>
            <person name="Rigbolt K.T."/>
            <person name="Prokhorova T.A."/>
            <person name="Akimov V."/>
            <person name="Henningsen J."/>
            <person name="Johansen P.T."/>
            <person name="Kratchmarova I."/>
            <person name="Kassem M."/>
            <person name="Mann M."/>
            <person name="Olsen J.V."/>
            <person name="Blagoev B."/>
        </authorList>
    </citation>
    <scope>PHOSPHORYLATION [LARGE SCALE ANALYSIS] AT SER-102</scope>
    <scope>IDENTIFICATION BY MASS SPECTROMETRY [LARGE SCALE ANALYSIS]</scope>
</reference>
<reference key="26">
    <citation type="journal article" date="2012" name="J. Biol. Chem.">
        <title>Crystal structure of calmodulin binding domain of orai1 in complex with Ca2+ calmodulin displays a unique binding mode.</title>
        <authorList>
            <person name="Liu Y."/>
            <person name="Zheng X."/>
            <person name="Mueller G.A."/>
            <person name="Sobhany M."/>
            <person name="DeRose E.F."/>
            <person name="Zhang Y."/>
            <person name="London R.E."/>
            <person name="Birnbaumer L."/>
        </authorList>
    </citation>
    <scope>INTERACTION WITH ORAI1</scope>
</reference>
<reference key="27">
    <citation type="journal article" date="2012" name="Mol. Cell. Proteomics">
        <title>Comparative large-scale characterisation of plant vs. mammal proteins reveals similar and idiosyncratic N-alpha acetylation features.</title>
        <authorList>
            <person name="Bienvenut W.V."/>
            <person name="Sumpton D."/>
            <person name="Martinez A."/>
            <person name="Lilla S."/>
            <person name="Espagne C."/>
            <person name="Meinnel T."/>
            <person name="Giglione C."/>
        </authorList>
    </citation>
    <scope>ACETYLATION [LARGE SCALE ANALYSIS] AT ALA-2</scope>
    <scope>CLEAVAGE OF INITIATOR METHIONINE [LARGE SCALE ANALYSIS]</scope>
    <scope>IDENTIFICATION BY MASS SPECTROMETRY [LARGE SCALE ANALYSIS]</scope>
</reference>
<reference key="28">
    <citation type="journal article" date="2012" name="Nat. Cell Biol.">
        <title>Distinct and separable activities of the endocytic clathrin-coat components Fcho1/2 and AP-2 in developmental patterning.</title>
        <authorList>
            <person name="Umasankar P.K."/>
            <person name="Sanker S."/>
            <person name="Thieman J.R."/>
            <person name="Chakraborty S."/>
            <person name="Wendland B."/>
            <person name="Tsang M."/>
            <person name="Traub L.M."/>
        </authorList>
    </citation>
    <scope>INTERACTION WITH FCHO1</scope>
</reference>
<reference key="29">
    <citation type="journal article" date="2012" name="Proc. Natl. Acad. Sci. U.S.A.">
        <title>N-terminal acetylome analyses and functional insights of the N-terminal acetyltransferase NatB.</title>
        <authorList>
            <person name="Van Damme P."/>
            <person name="Lasa M."/>
            <person name="Polevoda B."/>
            <person name="Gazquez C."/>
            <person name="Elosegui-Artola A."/>
            <person name="Kim D.S."/>
            <person name="De Juan-Pardo E."/>
            <person name="Demeyer K."/>
            <person name="Hole K."/>
            <person name="Larrea E."/>
            <person name="Timmerman E."/>
            <person name="Prieto J."/>
            <person name="Arnesen T."/>
            <person name="Sherman F."/>
            <person name="Gevaert K."/>
            <person name="Aldabe R."/>
        </authorList>
    </citation>
    <scope>ACETYLATION [LARGE SCALE ANALYSIS] AT ALA-2</scope>
    <scope>CLEAVAGE OF INITIATOR METHIONINE [LARGE SCALE ANALYSIS]</scope>
    <scope>IDENTIFICATION BY MASS SPECTROMETRY [LARGE SCALE ANALYSIS]</scope>
</reference>
<reference key="30">
    <citation type="journal article" date="2013" name="J. Proteome Res.">
        <title>Toward a comprehensive characterization of a human cancer cell phosphoproteome.</title>
        <authorList>
            <person name="Zhou H."/>
            <person name="Di Palma S."/>
            <person name="Preisinger C."/>
            <person name="Peng M."/>
            <person name="Polat A.N."/>
            <person name="Heck A.J."/>
            <person name="Mohammed S."/>
        </authorList>
    </citation>
    <scope>PHOSPHORYLATION [LARGE SCALE ANALYSIS] AT SER-82 AND SER-102</scope>
    <scope>IDENTIFICATION BY MASS SPECTROMETRY [LARGE SCALE ANALYSIS]</scope>
    <source>
        <tissue>Cervix carcinoma</tissue>
        <tissue>Erythroleukemia</tissue>
    </source>
</reference>
<reference key="31">
    <citation type="journal article" date="2014" name="J. Proteomics">
        <title>An enzyme assisted RP-RPLC approach for in-depth analysis of human liver phosphoproteome.</title>
        <authorList>
            <person name="Bian Y."/>
            <person name="Song C."/>
            <person name="Cheng K."/>
            <person name="Dong M."/>
            <person name="Wang F."/>
            <person name="Huang J."/>
            <person name="Sun D."/>
            <person name="Wang L."/>
            <person name="Ye M."/>
            <person name="Zou H."/>
        </authorList>
    </citation>
    <scope>PHOSPHORYLATION [LARGE SCALE ANALYSIS] AT SER-102 AND THR-111</scope>
    <scope>IDENTIFICATION BY MASS SPECTROMETRY [LARGE SCALE ANALYSIS]</scope>
    <source>
        <tissue>Liver</tissue>
    </source>
</reference>
<reference key="32">
    <citation type="journal article" date="2014" name="Mol. Cell. Proteomics">
        <title>Immunoaffinity enrichment and mass spectrometry analysis of protein methylation.</title>
        <authorList>
            <person name="Guo A."/>
            <person name="Gu H."/>
            <person name="Zhou J."/>
            <person name="Mulhern D."/>
            <person name="Wang Y."/>
            <person name="Lee K.A."/>
            <person name="Yang V."/>
            <person name="Aguiar M."/>
            <person name="Kornhauser J."/>
            <person name="Jia X."/>
            <person name="Ren J."/>
            <person name="Beausoleil S.A."/>
            <person name="Silva J.C."/>
            <person name="Vemulapalli V."/>
            <person name="Bedford M.T."/>
            <person name="Comb M.J."/>
        </authorList>
    </citation>
    <scope>METHYLATION [LARGE SCALE ANALYSIS] AT LYS-116</scope>
    <scope>IDENTIFICATION BY MASS SPECTROMETRY [LARGE SCALE ANALYSIS]</scope>
    <source>
        <tissue>Colon carcinoma</tissue>
    </source>
</reference>
<reference key="33">
    <citation type="journal article" date="2015" name="Mol. Cell. Proteomics">
        <title>KCMF1 (potassium channel modulatory factor 1) Links RAD6 to UBR4 (ubiquitin N-recognin domain-containing E3 ligase 4) and lysosome-mediated degradation.</title>
        <authorList>
            <person name="Hong J.H."/>
            <person name="Kaustov L."/>
            <person name="Coyaud E."/>
            <person name="Srikumar T."/>
            <person name="Wan J."/>
            <person name="Arrowsmith C."/>
            <person name="Raught B."/>
        </authorList>
    </citation>
    <scope>IDENTIFICATION IN THE SIFI COMPLEX</scope>
</reference>
<reference key="34">
    <citation type="journal article" date="2015" name="Proteomics">
        <title>N-terminome analysis of the human mitochondrial proteome.</title>
        <authorList>
            <person name="Vaca Jacome A.S."/>
            <person name="Rabilloud T."/>
            <person name="Schaeffer-Reiss C."/>
            <person name="Rompais M."/>
            <person name="Ayoub D."/>
            <person name="Lane L."/>
            <person name="Bairoch A."/>
            <person name="Van Dorsselaer A."/>
            <person name="Carapito C."/>
        </authorList>
    </citation>
    <scope>ACETYLATION [LARGE SCALE ANALYSIS] AT ALA-2</scope>
    <scope>CLEAVAGE OF INITIATOR METHIONINE [LARGE SCALE ANALYSIS]</scope>
    <scope>IDENTIFICATION BY MASS SPECTROMETRY [LARGE SCALE ANALYSIS]</scope>
</reference>
<reference key="35">
    <citation type="journal article" date="2016" name="Biochemistry">
        <title>Structural insights into the M-channel proximal C-terminus/calmodulin complex.</title>
        <authorList>
            <person name="Strulovich R."/>
            <person name="Tobelaim W.S."/>
            <person name="Attali B."/>
            <person name="Hirsch J.A."/>
        </authorList>
    </citation>
    <scope>INTERACTION KCNQ2 AND KCNQ3</scope>
</reference>
<reference key="36">
    <citation type="journal article" date="2016" name="Nat. Commun.">
        <title>PEP-19 modulates calcium binding to calmodulin by electrostatic steering.</title>
        <authorList>
            <person name="Wang X."/>
            <person name="Putkey J.A."/>
        </authorList>
    </citation>
    <scope>INTERACTION WITH PCP4</scope>
    <scope>REGION</scope>
</reference>
<reference key="37">
    <citation type="journal article" date="2017" name="Nat. Struct. Mol. Biol.">
        <title>Site-specific mapping of the human SUMO proteome reveals co-modification with phosphorylation.</title>
        <authorList>
            <person name="Hendriks I.A."/>
            <person name="Lyon D."/>
            <person name="Young C."/>
            <person name="Jensen L.J."/>
            <person name="Vertegaal A.C."/>
            <person name="Nielsen M.L."/>
        </authorList>
    </citation>
    <scope>SUMOYLATION [LARGE SCALE ANALYSIS] AT LYS-22</scope>
    <scope>IDENTIFICATION BY MASS SPECTROMETRY [LARGE SCALE ANALYSIS]</scope>
</reference>
<reference key="38">
    <citation type="journal article" date="2015" name="Heart Rhythm">
        <title>CALM3 mutation associated with long QT syndrome.</title>
        <authorList>
            <person name="Reed G.J."/>
            <person name="Boczek N.J."/>
            <person name="Etheridge S.P."/>
            <person name="Ackerman M.J."/>
        </authorList>
    </citation>
    <scope>INVOLVEMENT IN LQT16</scope>
    <scope>VARIANT LQT16 GLY-130</scope>
</reference>
<reference key="39">
    <citation type="journal article" date="2022" name="Cell">
        <title>A family of conserved bacterial virulence factors dampens interferon responses by blocking calcium signaling.</title>
        <authorList>
            <person name="Alphonse N."/>
            <person name="Wanford J.J."/>
            <person name="Voak A.A."/>
            <person name="Gay J."/>
            <person name="Venkhaya S."/>
            <person name="Burroughs O."/>
            <person name="Mathew S."/>
            <person name="Lee T."/>
            <person name="Evans S.L."/>
            <person name="Zhao W."/>
            <person name="Frowde K."/>
            <person name="Alrehaili A."/>
            <person name="Dickenson R.E."/>
            <person name="Munk M."/>
            <person name="Panina S."/>
            <person name="Mahmood I.F."/>
            <person name="Llorian M."/>
            <person name="Stanifer M.L."/>
            <person name="Boulant S."/>
            <person name="Berchtold M.W."/>
            <person name="Bergeron J.R.C."/>
            <person name="Wack A."/>
            <person name="Lesser C.F."/>
            <person name="Odendall C."/>
        </authorList>
    </citation>
    <scope>FUNCTION</scope>
    <scope>ACTIVITY REGULATION (MICROBIAL INFECTION)</scope>
    <scope>INTERACTION WITH S.FLEXNERI OSPC1 AND OSPC3 (MICROBIAL INFECTION)</scope>
</reference>
<reference key="40">
    <citation type="journal article" date="2022" name="Mol. Cell">
        <title>Pathogen hijacks programmed cell death signaling by arginine ADPR-deacylization of caspases.</title>
        <authorList>
            <person name="Peng T."/>
            <person name="Tao X."/>
            <person name="Xia Z."/>
            <person name="Hu S."/>
            <person name="Xue J."/>
            <person name="Zhu Q."/>
            <person name="Pan X."/>
            <person name="Zhang Q."/>
            <person name="Li S."/>
        </authorList>
    </citation>
    <scope>INTERACTION WITH C.VIOLACEUM COPC TOXIN (MICROBIAL INFECTION)</scope>
    <scope>FUNCTION (MICROBIAL INFECTION)</scope>
</reference>
<reference key="41">
    <citation type="journal article" date="2022" name="MBio">
        <title>Calmodulin binding activates chromobacterium CopC effector to ADP-riboxanate host apoptotic caspases.</title>
        <authorList>
            <person name="Liu Y."/>
            <person name="Zeng H."/>
            <person name="Hou Y."/>
            <person name="Li Z."/>
            <person name="Li L."/>
            <person name="Song X."/>
            <person name="Ding J."/>
            <person name="Shao F."/>
            <person name="Xu Y."/>
        </authorList>
    </citation>
    <scope>INTERACTION WITH C.VIOLACEUM COPC TOXIN (MICROBIAL INFECTION)</scope>
    <scope>FUNCTION (MICROBIAL INFECTION)</scope>
</reference>
<reference key="42">
    <citation type="journal article" date="2022" name="Mol. Cell">
        <title>Structural insights into caspase ADPR deacylization catalyzed by a bacterial effector and host calmodulin.</title>
        <authorList>
            <person name="Zhang K."/>
            <person name="Peng T."/>
            <person name="Tao X."/>
            <person name="Tian M."/>
            <person name="Li Y."/>
            <person name="Wang Z."/>
            <person name="Ma S."/>
            <person name="Hu S."/>
            <person name="Pan X."/>
            <person name="Xue J."/>
            <person name="Luo J."/>
            <person name="Wu Q."/>
            <person name="Fu Y."/>
            <person name="Li S."/>
        </authorList>
    </citation>
    <scope>INTERACTION WITH C.VIOLACEUM COPC TOXIN (MICROBIAL INFECTION)</scope>
    <scope>FUNCTION (MICROBIAL INFECTION)</scope>
</reference>
<reference key="43">
    <citation type="journal article" date="2023" name="Nat. Struct. Mol. Biol.">
        <title>Structural mechanisms of calmodulin activation of Shigella effector OspC3 to ADP-riboxanate caspase-4/11 and block pyroptosis.</title>
        <authorList>
            <person name="Hou Y."/>
            <person name="Zeng H."/>
            <person name="Li Z."/>
            <person name="Feng N."/>
            <person name="Meng F."/>
            <person name="Xu Y."/>
            <person name="Li L."/>
            <person name="Shao F."/>
            <person name="Ding J."/>
        </authorList>
    </citation>
    <scope>FUNCTION (MICROBIAL INFECTION)</scope>
    <scope>INTERACTION WITH S.FLEXNERI OSPC3 (MICROBIAL INFECTION)</scope>
</reference>
<reference key="44">
    <citation type="journal article" date="2024" name="Nature">
        <title>Stress response silencing by an E3 ligase mutated in neurodegeneration.</title>
        <authorList>
            <person name="Haakonsen D.L."/>
            <person name="Heider M."/>
            <person name="Ingersoll A.J."/>
            <person name="Vodehnal K."/>
            <person name="Witus S.R."/>
            <person name="Uenaka T."/>
            <person name="Wernig M."/>
            <person name="Rape M."/>
        </authorList>
    </citation>
    <scope>IDENTIFICATION IN THE SIFI COMPLEX</scope>
</reference>
<reference key="45">
    <citation type="journal article" date="2016" name="Circ. Arrhythm. Electrophysiol.">
        <title>Novel CPVT-Associated Calmodulin Mutation in CALM3 (CALM3-A103V) Activates Arrhythmogenic Ca Waves and Sparks.</title>
        <authorList>
            <person name="Gomez-Hurtado N."/>
            <person name="Boczek N.J."/>
            <person name="Kryshtal D.O."/>
            <person name="Johnson C.N."/>
            <person name="Sun J."/>
            <person name="Nitu F.R."/>
            <person name="Cornea R.L."/>
            <person name="Chazin W.J."/>
            <person name="Calvert M.L."/>
            <person name="Tester D.J."/>
            <person name="Ackerman M.J."/>
            <person name="Knollmann B.C."/>
        </authorList>
    </citation>
    <scope>INVOLVEMENT IN CPVT6</scope>
    <scope>VARIANT CPVT6 VAL-103</scope>
    <scope>CHARACTERIZATION OF VARIANT CPVT6 VAL-103</scope>
    <scope>INTERACTION WITH RYR2</scope>
</reference>
<reference key="46">
    <citation type="journal article" date="2019" name="Circ. Genom. Precis. Med.">
        <title>Genetic mosaicism in calmodulinopathy.</title>
        <authorList>
            <person name="Wren L.M."/>
            <person name="Jimenez-Jaimez J."/>
            <person name="Al-Ghamdi S."/>
            <person name="Al-Aama J.Y."/>
            <person name="Bdeir A."/>
            <person name="Al-Hassnan Z.N."/>
            <person name="Kuan J.L."/>
            <person name="Foo R.Y."/>
            <person name="Potet F."/>
            <person name="Johnson C.N."/>
            <person name="Aziz M.C."/>
            <person name="Carvill G.L."/>
            <person name="Kaski J.P."/>
            <person name="Crotti L."/>
            <person name="Perin F."/>
            <person name="Monserrat L."/>
            <person name="Burridge P.W."/>
            <person name="Schwartz P.J."/>
            <person name="Chazin W.J."/>
            <person name="Bhuiyan Z.A."/>
            <person name="George A.L. Jr."/>
        </authorList>
    </citation>
    <scope>INVOLVEMENT IN LQT16</scope>
    <scope>VARIANTS LQT16 GLY-130 AND LYS-141</scope>
    <scope>CHARACTERIZATION OF VARIANT LQT16 LYS-141</scope>
    <scope>FUNCTION</scope>
</reference>
<feature type="initiator methionine" description="Removed" evidence="31 33 37 41 42 46">
    <location>
        <position position="1"/>
    </location>
</feature>
<feature type="chain" id="PRO_0000439934" description="Calmodulin-3">
    <location>
        <begin position="2"/>
        <end position="149"/>
    </location>
</feature>
<feature type="domain" description="EF-hand 1" evidence="7">
    <location>
        <begin position="8"/>
        <end position="43"/>
    </location>
</feature>
<feature type="domain" description="EF-hand 2" evidence="7">
    <location>
        <begin position="44"/>
        <end position="79"/>
    </location>
</feature>
<feature type="domain" description="EF-hand 3" evidence="7">
    <location>
        <begin position="81"/>
        <end position="116"/>
    </location>
</feature>
<feature type="domain" description="EF-hand 4" evidence="7">
    <location>
        <begin position="117"/>
        <end position="149"/>
    </location>
</feature>
<feature type="region of interest" description="Necessary and sufficient for interaction with PCP4" evidence="23">
    <location>
        <begin position="77"/>
        <end position="149"/>
    </location>
</feature>
<feature type="binding site" evidence="7 10">
    <location>
        <position position="21"/>
    </location>
    <ligand>
        <name>Ca(2+)</name>
        <dbReference type="ChEBI" id="CHEBI:29108"/>
        <label>1</label>
    </ligand>
</feature>
<feature type="binding site" evidence="7 10">
    <location>
        <position position="23"/>
    </location>
    <ligand>
        <name>Ca(2+)</name>
        <dbReference type="ChEBI" id="CHEBI:29108"/>
        <label>1</label>
    </ligand>
</feature>
<feature type="binding site" evidence="7 10">
    <location>
        <position position="25"/>
    </location>
    <ligand>
        <name>Ca(2+)</name>
        <dbReference type="ChEBI" id="CHEBI:29108"/>
        <label>1</label>
    </ligand>
</feature>
<feature type="binding site" evidence="7 10">
    <location>
        <position position="27"/>
    </location>
    <ligand>
        <name>Ca(2+)</name>
        <dbReference type="ChEBI" id="CHEBI:29108"/>
        <label>1</label>
    </ligand>
</feature>
<feature type="binding site" evidence="7 10">
    <location>
        <position position="32"/>
    </location>
    <ligand>
        <name>Ca(2+)</name>
        <dbReference type="ChEBI" id="CHEBI:29108"/>
        <label>1</label>
    </ligand>
</feature>
<feature type="binding site" evidence="7 10">
    <location>
        <position position="57"/>
    </location>
    <ligand>
        <name>Ca(2+)</name>
        <dbReference type="ChEBI" id="CHEBI:29108"/>
        <label>2</label>
    </ligand>
</feature>
<feature type="binding site" evidence="7 10">
    <location>
        <position position="59"/>
    </location>
    <ligand>
        <name>Ca(2+)</name>
        <dbReference type="ChEBI" id="CHEBI:29108"/>
        <label>2</label>
    </ligand>
</feature>
<feature type="binding site" evidence="7 10">
    <location>
        <position position="61"/>
    </location>
    <ligand>
        <name>Ca(2+)</name>
        <dbReference type="ChEBI" id="CHEBI:29108"/>
        <label>2</label>
    </ligand>
</feature>
<feature type="binding site" evidence="7 10">
    <location>
        <position position="63"/>
    </location>
    <ligand>
        <name>Ca(2+)</name>
        <dbReference type="ChEBI" id="CHEBI:29108"/>
        <label>2</label>
    </ligand>
</feature>
<feature type="binding site" evidence="7 10">
    <location>
        <position position="68"/>
    </location>
    <ligand>
        <name>Ca(2+)</name>
        <dbReference type="ChEBI" id="CHEBI:29108"/>
        <label>2</label>
    </ligand>
</feature>
<feature type="binding site" evidence="7 10">
    <location>
        <position position="94"/>
    </location>
    <ligand>
        <name>Ca(2+)</name>
        <dbReference type="ChEBI" id="CHEBI:29108"/>
        <label>3</label>
    </ligand>
</feature>
<feature type="binding site" evidence="7 10">
    <location>
        <position position="96"/>
    </location>
    <ligand>
        <name>Ca(2+)</name>
        <dbReference type="ChEBI" id="CHEBI:29108"/>
        <label>3</label>
    </ligand>
</feature>
<feature type="binding site" evidence="7 10">
    <location>
        <position position="98"/>
    </location>
    <ligand>
        <name>Ca(2+)</name>
        <dbReference type="ChEBI" id="CHEBI:29108"/>
        <label>3</label>
    </ligand>
</feature>
<feature type="binding site" evidence="7 10">
    <location>
        <position position="100"/>
    </location>
    <ligand>
        <name>Ca(2+)</name>
        <dbReference type="ChEBI" id="CHEBI:29108"/>
        <label>3</label>
    </ligand>
</feature>
<feature type="binding site" evidence="7 10">
    <location>
        <position position="105"/>
    </location>
    <ligand>
        <name>Ca(2+)</name>
        <dbReference type="ChEBI" id="CHEBI:29108"/>
        <label>3</label>
    </ligand>
</feature>
<feature type="binding site" evidence="7 10">
    <location>
        <position position="130"/>
    </location>
    <ligand>
        <name>Ca(2+)</name>
        <dbReference type="ChEBI" id="CHEBI:29108"/>
        <label>4</label>
    </ligand>
</feature>
<feature type="binding site" evidence="7 10">
    <location>
        <position position="132"/>
    </location>
    <ligand>
        <name>Ca(2+)</name>
        <dbReference type="ChEBI" id="CHEBI:29108"/>
        <label>4</label>
    </ligand>
</feature>
<feature type="binding site" evidence="7 10">
    <location>
        <position position="134"/>
    </location>
    <ligand>
        <name>Ca(2+)</name>
        <dbReference type="ChEBI" id="CHEBI:29108"/>
        <label>4</label>
    </ligand>
</feature>
<feature type="binding site" evidence="7 10">
    <location>
        <position position="136"/>
    </location>
    <ligand>
        <name>Ca(2+)</name>
        <dbReference type="ChEBI" id="CHEBI:29108"/>
        <label>4</label>
    </ligand>
</feature>
<feature type="binding site" evidence="7 10">
    <location>
        <position position="141"/>
    </location>
    <ligand>
        <name>Ca(2+)</name>
        <dbReference type="ChEBI" id="CHEBI:29108"/>
        <label>4</label>
    </ligand>
</feature>
<feature type="modified residue" description="N-acetylalanine" evidence="31 33 37 41 42 46">
    <location>
        <position position="2"/>
    </location>
</feature>
<feature type="modified residue" description="N6-acetyllysine; alternate" evidence="38">
    <location>
        <position position="22"/>
    </location>
</feature>
<feature type="modified residue" description="Phosphothreonine; by CaMK4" evidence="3">
    <location>
        <position position="45"/>
    </location>
</feature>
<feature type="modified residue" description="Phosphoserine" evidence="43">
    <location>
        <position position="82"/>
    </location>
</feature>
<feature type="modified residue" description="N6-acetyllysine" evidence="38">
    <location>
        <position position="95"/>
    </location>
</feature>
<feature type="modified residue" description="Phosphotyrosine" evidence="36 39">
    <location>
        <position position="100"/>
    </location>
</feature>
<feature type="modified residue" description="Phosphoserine" evidence="40 43 45">
    <location>
        <position position="102"/>
    </location>
</feature>
<feature type="modified residue" description="Phosphothreonine" evidence="45">
    <location>
        <position position="111"/>
    </location>
</feature>
<feature type="modified residue" description="N6,N6,N6-trimethyllysine; alternate" evidence="31 44">
    <location>
        <position position="116"/>
    </location>
</feature>
<feature type="modified residue" description="N6-methyllysine; alternate" evidence="44">
    <location>
        <position position="116"/>
    </location>
</feature>
<feature type="modified residue" description="Phosphotyrosine" evidence="39">
    <location>
        <position position="139"/>
    </location>
</feature>
<feature type="cross-link" description="Glycyl lysine isopeptide (Lys-Gly) (interchain with G-Cter in SUMO2); alternate" evidence="47">
    <location>
        <position position="22"/>
    </location>
</feature>
<feature type="cross-link" description="Glycyl lysine isopeptide (Lys-Gly) (interchain with G-Cter in ubiquitin); alternate" evidence="4">
    <location>
        <position position="22"/>
    </location>
</feature>
<feature type="sequence variant" id="VAR_078261" description="In CPVT6; decreased calcium-binding affinity; not changed binding to RYR2; increased RYR2 calcium-release channel activity; decreased calcium-dependent inactivation of L-type calcium channel; not changed action potential duration." evidence="21">
    <original>A</original>
    <variation>V</variation>
    <location>
        <position position="103"/>
    </location>
</feature>
<feature type="sequence variant" id="VAR_083815" description="In LQT16." evidence="19 24">
    <original>D</original>
    <variation>G</variation>
    <location>
        <position position="130"/>
    </location>
</feature>
<feature type="sequence variant" id="VAR_083816" description="In LQT16; loss-of-function variant causing impaired negative regulation of high voltage-gated calcium channel activity; impaired regulation of cardiac muscle cell action potential; decreased calcium ion binding." evidence="24">
    <original>E</original>
    <variation>K</variation>
    <location>
        <position position="141"/>
    </location>
</feature>
<feature type="helix" evidence="48">
    <location>
        <begin position="9"/>
        <end position="20"/>
    </location>
</feature>
<feature type="strand" evidence="49">
    <location>
        <begin position="26"/>
        <end position="28"/>
    </location>
</feature>
<feature type="helix" evidence="48">
    <location>
        <begin position="30"/>
        <end position="39"/>
    </location>
</feature>
<feature type="helix" evidence="48">
    <location>
        <begin position="46"/>
        <end position="54"/>
    </location>
</feature>
<feature type="strand" evidence="50">
    <location>
        <begin position="57"/>
        <end position="59"/>
    </location>
</feature>
<feature type="strand" evidence="48">
    <location>
        <begin position="61"/>
        <end position="64"/>
    </location>
</feature>
<feature type="helix" evidence="48">
    <location>
        <begin position="66"/>
        <end position="76"/>
    </location>
</feature>
<feature type="helix" evidence="49">
    <location>
        <begin position="80"/>
        <end position="92"/>
    </location>
</feature>
<feature type="strand" evidence="50">
    <location>
        <begin position="95"/>
        <end position="97"/>
    </location>
</feature>
<feature type="strand" evidence="49">
    <location>
        <begin position="98"/>
        <end position="102"/>
    </location>
</feature>
<feature type="helix" evidence="49">
    <location>
        <begin position="103"/>
        <end position="112"/>
    </location>
</feature>
<feature type="strand" evidence="49">
    <location>
        <begin position="113"/>
        <end position="115"/>
    </location>
</feature>
<feature type="helix" evidence="49">
    <location>
        <begin position="119"/>
        <end position="128"/>
    </location>
</feature>
<feature type="strand" evidence="49">
    <location>
        <begin position="133"/>
        <end position="138"/>
    </location>
</feature>
<feature type="helix" evidence="49">
    <location>
        <begin position="139"/>
        <end position="146"/>
    </location>
</feature>
<protein>
    <recommendedName>
        <fullName evidence="35">Calmodulin-3</fullName>
    </recommendedName>
</protein>